<keyword id="KW-0997">Cell inner membrane</keyword>
<keyword id="KW-1003">Cell membrane</keyword>
<keyword id="KW-0472">Membrane</keyword>
<keyword id="KW-0520">NAD</keyword>
<keyword id="KW-0874">Quinone</keyword>
<keyword id="KW-1278">Translocase</keyword>
<keyword id="KW-0813">Transport</keyword>
<keyword id="KW-0830">Ubiquinone</keyword>
<gene>
    <name evidence="1" type="primary">nuoC</name>
    <name type="ordered locus">BamMC406_2164</name>
</gene>
<feature type="chain" id="PRO_0000358059" description="NADH-quinone oxidoreductase subunit C">
    <location>
        <begin position="1"/>
        <end position="200"/>
    </location>
</feature>
<proteinExistence type="inferred from homology"/>
<comment type="function">
    <text evidence="1">NDH-1 shuttles electrons from NADH, via FMN and iron-sulfur (Fe-S) centers, to quinones in the respiratory chain. The immediate electron acceptor for the enzyme in this species is believed to be ubiquinone. Couples the redox reaction to proton translocation (for every two electrons transferred, four hydrogen ions are translocated across the cytoplasmic membrane), and thus conserves the redox energy in a proton gradient.</text>
</comment>
<comment type="catalytic activity">
    <reaction evidence="1">
        <text>a quinone + NADH + 5 H(+)(in) = a quinol + NAD(+) + 4 H(+)(out)</text>
        <dbReference type="Rhea" id="RHEA:57888"/>
        <dbReference type="ChEBI" id="CHEBI:15378"/>
        <dbReference type="ChEBI" id="CHEBI:24646"/>
        <dbReference type="ChEBI" id="CHEBI:57540"/>
        <dbReference type="ChEBI" id="CHEBI:57945"/>
        <dbReference type="ChEBI" id="CHEBI:132124"/>
    </reaction>
</comment>
<comment type="subunit">
    <text evidence="1">NDH-1 is composed of 14 different subunits. Subunits NuoB, C, D, E, F, and G constitute the peripheral sector of the complex.</text>
</comment>
<comment type="subcellular location">
    <subcellularLocation>
        <location evidence="1">Cell inner membrane</location>
        <topology evidence="1">Peripheral membrane protein</topology>
        <orientation evidence="1">Cytoplasmic side</orientation>
    </subcellularLocation>
</comment>
<comment type="similarity">
    <text evidence="1">Belongs to the complex I 30 kDa subunit family.</text>
</comment>
<dbReference type="EC" id="7.1.1.-" evidence="1"/>
<dbReference type="EMBL" id="CP001025">
    <property type="protein sequence ID" value="ACB64643.1"/>
    <property type="molecule type" value="Genomic_DNA"/>
</dbReference>
<dbReference type="RefSeq" id="WP_006750458.1">
    <property type="nucleotide sequence ID" value="NC_010551.1"/>
</dbReference>
<dbReference type="SMR" id="B1YTQ5"/>
<dbReference type="KEGG" id="bac:BamMC406_2164"/>
<dbReference type="HOGENOM" id="CLU_042628_2_1_4"/>
<dbReference type="OrthoDB" id="9803286at2"/>
<dbReference type="Proteomes" id="UP000001680">
    <property type="component" value="Chromosome 1"/>
</dbReference>
<dbReference type="GO" id="GO:0005886">
    <property type="term" value="C:plasma membrane"/>
    <property type="evidence" value="ECO:0007669"/>
    <property type="project" value="UniProtKB-SubCell"/>
</dbReference>
<dbReference type="GO" id="GO:0008137">
    <property type="term" value="F:NADH dehydrogenase (ubiquinone) activity"/>
    <property type="evidence" value="ECO:0007669"/>
    <property type="project" value="InterPro"/>
</dbReference>
<dbReference type="GO" id="GO:0050136">
    <property type="term" value="F:NADH:ubiquinone reductase (non-electrogenic) activity"/>
    <property type="evidence" value="ECO:0007669"/>
    <property type="project" value="UniProtKB-UniRule"/>
</dbReference>
<dbReference type="GO" id="GO:0048038">
    <property type="term" value="F:quinone binding"/>
    <property type="evidence" value="ECO:0007669"/>
    <property type="project" value="UniProtKB-KW"/>
</dbReference>
<dbReference type="Gene3D" id="3.30.460.80">
    <property type="entry name" value="NADH:ubiquinone oxidoreductase, 30kDa subunit"/>
    <property type="match status" value="1"/>
</dbReference>
<dbReference type="HAMAP" id="MF_01357">
    <property type="entry name" value="NDH1_NuoC"/>
    <property type="match status" value="1"/>
</dbReference>
<dbReference type="InterPro" id="IPR010218">
    <property type="entry name" value="NADH_DH_suC"/>
</dbReference>
<dbReference type="InterPro" id="IPR037232">
    <property type="entry name" value="NADH_quin_OxRdtase_su_C/D-like"/>
</dbReference>
<dbReference type="InterPro" id="IPR001268">
    <property type="entry name" value="NADH_UbQ_OxRdtase_30kDa_su"/>
</dbReference>
<dbReference type="InterPro" id="IPR020396">
    <property type="entry name" value="NADH_UbQ_OxRdtase_CS"/>
</dbReference>
<dbReference type="NCBIfam" id="TIGR01961">
    <property type="entry name" value="NuoC_fam"/>
    <property type="match status" value="1"/>
</dbReference>
<dbReference type="NCBIfam" id="NF004730">
    <property type="entry name" value="PRK06074.1-1"/>
    <property type="match status" value="1"/>
</dbReference>
<dbReference type="PANTHER" id="PTHR10884:SF14">
    <property type="entry name" value="NADH DEHYDROGENASE [UBIQUINONE] IRON-SULFUR PROTEIN 3, MITOCHONDRIAL"/>
    <property type="match status" value="1"/>
</dbReference>
<dbReference type="PANTHER" id="PTHR10884">
    <property type="entry name" value="NADH DEHYDROGENASE UBIQUINONE IRON-SULFUR PROTEIN 3"/>
    <property type="match status" value="1"/>
</dbReference>
<dbReference type="Pfam" id="PF00329">
    <property type="entry name" value="Complex1_30kDa"/>
    <property type="match status" value="1"/>
</dbReference>
<dbReference type="SUPFAM" id="SSF143243">
    <property type="entry name" value="Nqo5-like"/>
    <property type="match status" value="1"/>
</dbReference>
<dbReference type="PROSITE" id="PS00542">
    <property type="entry name" value="COMPLEX1_30K"/>
    <property type="match status" value="1"/>
</dbReference>
<sequence>MASKIEILKANLEAALGARVVSLTEAIGELTLVVKASDYLEVAKTLRDDPKLRFEQLIDLCGVDYQTYGDGAYDGPRFAAVSQLLSVTNNWRLRLRVFAPDDDLPIVASLVDIWTSANWYEREAFDLYGLVFEGHPDLRRILTDYGFIGHPFRKDFPVSGYVEMRYDPEEKRVVYQPVTIEPREITPRVIREDRYGGLKH</sequence>
<accession>B1YTQ5</accession>
<evidence type="ECO:0000255" key="1">
    <source>
        <dbReference type="HAMAP-Rule" id="MF_01357"/>
    </source>
</evidence>
<name>NUOC_BURA4</name>
<reference key="1">
    <citation type="submission" date="2008-04" db="EMBL/GenBank/DDBJ databases">
        <title>Complete sequence of chromosome 1 of Burkholderia ambifaria MC40-6.</title>
        <authorList>
            <person name="Copeland A."/>
            <person name="Lucas S."/>
            <person name="Lapidus A."/>
            <person name="Glavina del Rio T."/>
            <person name="Dalin E."/>
            <person name="Tice H."/>
            <person name="Pitluck S."/>
            <person name="Chain P."/>
            <person name="Malfatti S."/>
            <person name="Shin M."/>
            <person name="Vergez L."/>
            <person name="Lang D."/>
            <person name="Schmutz J."/>
            <person name="Larimer F."/>
            <person name="Land M."/>
            <person name="Hauser L."/>
            <person name="Kyrpides N."/>
            <person name="Lykidis A."/>
            <person name="Ramette A."/>
            <person name="Konstantinidis K."/>
            <person name="Tiedje J."/>
            <person name="Richardson P."/>
        </authorList>
    </citation>
    <scope>NUCLEOTIDE SEQUENCE [LARGE SCALE GENOMIC DNA]</scope>
    <source>
        <strain>MC40-6</strain>
    </source>
</reference>
<protein>
    <recommendedName>
        <fullName evidence="1">NADH-quinone oxidoreductase subunit C</fullName>
        <ecNumber evidence="1">7.1.1.-</ecNumber>
    </recommendedName>
    <alternativeName>
        <fullName evidence="1">NADH dehydrogenase I subunit C</fullName>
    </alternativeName>
    <alternativeName>
        <fullName evidence="1">NDH-1 subunit C</fullName>
    </alternativeName>
</protein>
<organism>
    <name type="scientific">Burkholderia ambifaria (strain MC40-6)</name>
    <dbReference type="NCBI Taxonomy" id="398577"/>
    <lineage>
        <taxon>Bacteria</taxon>
        <taxon>Pseudomonadati</taxon>
        <taxon>Pseudomonadota</taxon>
        <taxon>Betaproteobacteria</taxon>
        <taxon>Burkholderiales</taxon>
        <taxon>Burkholderiaceae</taxon>
        <taxon>Burkholderia</taxon>
        <taxon>Burkholderia cepacia complex</taxon>
    </lineage>
</organism>